<accession>P73563</accession>
<feature type="chain" id="PRO_0000459049" description="High light-inducible protein HliC">
    <location>
        <begin position="1"/>
        <end position="47"/>
    </location>
</feature>
<feature type="topological domain" description="Cytoplasmic" evidence="19">
    <location>
        <begin position="1"/>
        <end position="14"/>
    </location>
</feature>
<feature type="transmembrane region" evidence="18">
    <location>
        <begin position="15"/>
        <end position="36"/>
    </location>
</feature>
<feature type="topological domain" description="Lumenal, thylakoid" evidence="19">
    <location>
        <begin position="37"/>
        <end position="47"/>
    </location>
</feature>
<feature type="short sequence motif" description="Chlorophyll-binding motif" evidence="16">
    <location>
        <begin position="15"/>
        <end position="20"/>
    </location>
</feature>
<reference evidence="20" key="1">
    <citation type="journal article" date="1996" name="DNA Res.">
        <title>Sequence analysis of the genome of the unicellular cyanobacterium Synechocystis sp. strain PCC6803. II. Sequence determination of the entire genome and assignment of potential protein-coding regions.</title>
        <authorList>
            <person name="Kaneko T."/>
            <person name="Sato S."/>
            <person name="Kotani H."/>
            <person name="Tanaka A."/>
            <person name="Asamizu E."/>
            <person name="Nakamura Y."/>
            <person name="Miyajima N."/>
            <person name="Hirosawa M."/>
            <person name="Sugiura M."/>
            <person name="Sasamoto S."/>
            <person name="Kimura T."/>
            <person name="Hosouchi T."/>
            <person name="Matsuno A."/>
            <person name="Muraki A."/>
            <person name="Nakazaki N."/>
            <person name="Naruo K."/>
            <person name="Okumura S."/>
            <person name="Shimpo S."/>
            <person name="Takeuchi C."/>
            <person name="Wada T."/>
            <person name="Watanabe A."/>
            <person name="Yamada M."/>
            <person name="Yasuda M."/>
            <person name="Tabata S."/>
        </authorList>
    </citation>
    <scope>NUCLEOTIDE SEQUENCE [LARGE SCALE GENOMIC DNA]</scope>
    <source>
        <strain>ATCC 27184 / PCC 6803 / Kazusa</strain>
    </source>
</reference>
<reference key="2">
    <citation type="journal article" date="2001" name="J. Biol. Chem.">
        <title>The high light-inducible polypeptides in Synechocystis PCC6803. Expression and function in high light.</title>
        <authorList>
            <person name="He Q."/>
            <person name="Dolganov N."/>
            <person name="Bjorkman O."/>
            <person name="Grossman A.R."/>
        </authorList>
    </citation>
    <scope>PROTEIN SEQUENCE OF 1-8</scope>
    <scope>SUBCELLULAR LOCATION</scope>
    <scope>INDUCTION BY HIGH LIGHT</scope>
    <scope>DISRUPTION PHENOTYPE</scope>
    <source>
        <strain>ATCC 27184 / PCC 6803 / Kazusa</strain>
    </source>
</reference>
<reference key="3">
    <citation type="journal article" date="2015" name="Nat. Chem. Biol.">
        <title>Mechanism of photoprotection in the cyanobacterial ancestor of plant antenna proteins.</title>
        <authorList>
            <person name="Staleva H."/>
            <person name="Komenda J."/>
            <person name="Shukla M.K."/>
            <person name="Slouf V."/>
            <person name="Kana R."/>
            <person name="Polivka T."/>
            <person name="Sobotka R."/>
        </authorList>
    </citation>
    <scope>PROTEIN SEQUENCE OF 8-20</scope>
    <scope>SUBUNIT</scope>
    <scope>DISRUPTION PHENOTYPE</scope>
    <source>
        <strain>ATCC 27184 / PCC 6803 / Kazusa</strain>
    </source>
</reference>
<reference key="4">
    <citation type="journal article" date="1999" name="Biochemistry">
        <title>A cyanobacterial gene family coding for single-helix proteins resembling part of the light-harvesting proteins from higher plants.</title>
        <authorList>
            <person name="Funk C."/>
            <person name="Vermaas W."/>
        </authorList>
    </citation>
    <scope>INDUCTION</scope>
    <source>
        <strain>ATCC 27184 / PCC 6803 / Kazusa</strain>
    </source>
</reference>
<reference key="5">
    <citation type="journal article" date="2002" name="Plant Mol. Biol.">
        <title>Small Cab-like proteins regulating tetrapyrrole biosynthesis in the cyanobacterium Synechocystis sp. PCC 6803.</title>
        <authorList>
            <person name="Xu H."/>
            <person name="Vavilin D."/>
            <person name="Funk C."/>
            <person name="Vermaas W."/>
        </authorList>
    </citation>
    <scope>POSSIBLE FUNCTION IN TETRAPYRROLE SYNTHESIS</scope>
    <scope>DISRUPTION PHENOTYPE</scope>
    <source>
        <strain>ATCC 27184 / PCC 6803 / Kazusa</strain>
    </source>
</reference>
<reference key="6">
    <citation type="journal article" date="2004" name="J. Biol. Chem.">
        <title>Multiple deletions of small Cab-like proteins in the cyanobacterium Synechocystis sp. PCC 6803: consequences for pigment biosynthesis and accumulation.</title>
        <authorList>
            <person name="Xu H."/>
            <person name="Vavilin D."/>
            <person name="Funk C."/>
            <person name="Vermaas W."/>
        </authorList>
    </citation>
    <scope>FUNCTION</scope>
    <source>
        <strain>ATCC 27184 / PCC 6803 / Kazusa</strain>
    </source>
</reference>
<reference key="7">
    <citation type="journal article" date="2007" name="J. Biol. Chem.">
        <title>Localization of the small CAB-like proteins in photosystem II.</title>
        <authorList>
            <person name="Yao D."/>
            <person name="Kieselbach T."/>
            <person name="Komenda J."/>
            <person name="Promnares K."/>
            <person name="Prieto M.A."/>
            <person name="Tichy M."/>
            <person name="Vermaas W."/>
            <person name="Funk C."/>
        </authorList>
    </citation>
    <scope>SUBUNIT</scope>
    <scope>SUBCELLULAR LOCATION</scope>
    <source>
        <strain>ATCC 27184 / PCC 6803 / Kazusa</strain>
    </source>
</reference>
<reference key="8">
    <citation type="journal article" date="2008" name="Photosyn. Res.">
        <title>The small CAB-like proteins of Synechocystis sp. PCC 6803 bind chlorophyll. In vitro pigment reconstitution studies on one-helix light-harvesting-like proteins.</title>
        <authorList>
            <person name="Storm P."/>
            <person name="Hernandez-Prieto M.A."/>
            <person name="Eggink L.L."/>
            <person name="Hoober J.K."/>
            <person name="Funk C."/>
        </authorList>
    </citation>
    <scope>POSSIBLE PIGMENT-BINDING</scope>
    <scope>MOTIF</scope>
    <scope>DISRUPTION PHENOTYPE</scope>
    <source>
        <strain>ATCC 27184 / PCC 6803 / Kazusa</strain>
    </source>
</reference>
<reference key="9">
    <citation type="journal article" date="2012" name="J. Biol. Chem.">
        <title>Photosystem II component lifetimes in the cyanobacterium Synechocystis sp. strain PCC 6803: small Cab-like proteins stabilize biosynthesis intermediates and affect early steps in chlorophyll synthesis.</title>
        <authorList>
            <person name="Yao D.C.I."/>
            <person name="Brune D.C."/>
            <person name="Vavilin D."/>
            <person name="Vermaas W.F.J."/>
        </authorList>
    </citation>
    <scope>POSSIBLE FUNCTION IN AMINOLEVULINIC ACID SYNTHESIS</scope>
    <scope>POSSIBLE FUNCTION IN PSII ASSEMBLY</scope>
    <scope>DISRUPTION PHENOTYPE</scope>
    <source>
        <strain>ATCC 27184 / PCC 6803 / Kazusa</strain>
    </source>
</reference>
<reference key="10">
    <citation type="journal article" date="2014" name="Plant Cell">
        <title>Discovery of a chlorophyll binding protein complex involved in the early steps of photosystem II assembly in Synechocystis.</title>
        <authorList>
            <person name="Knoppova J."/>
            <person name="Sobotka R."/>
            <person name="Tichy M."/>
            <person name="Yu J."/>
            <person name="Konik P."/>
            <person name="Halada P."/>
            <person name="Nixon P.J."/>
            <person name="Komenda J."/>
        </authorList>
    </citation>
    <scope>FUNCTION</scope>
    <scope>SUBUNIT</scope>
    <scope>SUBCELLULAR LOCATION</scope>
    <scope>DISRUPTION PHENOTYPE</scope>
    <source>
        <strain>ATCC 27184 / PCC 6803 / Kazusa</strain>
    </source>
</reference>
<reference key="11">
    <citation type="journal article" date="2018" name="Photosyn. Res.">
        <title>Binding of pigments to the cyanobacterial high-light-inducible protein HliC.</title>
        <authorList>
            <person name="Shukla M.K."/>
            <person name="Llansola-Portoles M.J."/>
            <person name="Tichy M."/>
            <person name="Pascal A.A."/>
            <person name="Robert B."/>
            <person name="Sobotka R."/>
        </authorList>
    </citation>
    <scope>FUNCTION</scope>
    <scope>SUBUNIT</scope>
    <scope>SUBCELLULAR LOCATION</scope>
    <source>
        <strain>ATCC 27184 / PCC 6803 / Kazusa</strain>
    </source>
</reference>
<reference key="12">
    <citation type="journal article" date="2022" name="Photosyn. Res.">
        <title>High-light-inducible proteins HliA and HliB: pigment binding and protein-protein interactions.</title>
        <authorList>
            <person name="Konert M.M."/>
            <person name="Wysocka A."/>
            <person name="Konik P."/>
            <person name="Sobotka R."/>
        </authorList>
    </citation>
    <scope>FUNCTION</scope>
    <scope>SUBUNIT</scope>
    <scope>SUBCELLULAR LOCATION</scope>
    <scope>DISRUPTION PHENOTYPE</scope>
    <scope>TOPOLOGY</scope>
    <scope>PIGMENT-BINDING</scope>
    <source>
        <strain>ATCC 27184 / PCC 6803 / Kazusa</strain>
    </source>
</reference>
<keyword id="KW-0903">Direct protein sequencing</keyword>
<keyword id="KW-0472">Membrane</keyword>
<keyword id="KW-0602">Photosynthesis</keyword>
<keyword id="KW-0604">Photosystem II</keyword>
<keyword id="KW-0608">Pigment</keyword>
<keyword id="KW-1185">Reference proteome</keyword>
<keyword id="KW-0346">Stress response</keyword>
<keyword id="KW-0793">Thylakoid</keyword>
<keyword id="KW-0812">Transmembrane</keyword>
<keyword id="KW-1133">Transmembrane helix</keyword>
<name>HLIC_SYNY3</name>
<comment type="function">
    <text evidence="7 10 14 16">Forms a number of heteromers involved in photosystem II (PSII) assembly and/or repair under high light stress (PubMed:24681620, PubMed:35218444). Required for binding of chlorophyll and carotenoids by the Ycf39-Hlip complex. The Ycf39-Hlip complex binds D1 at an early stage of PSII assembly along with Ycf48, ribosomes and ChlG, the last enzyme in chlorophyll biosynthesis; it may be involved in chlorophyll reuse and delivery to D1 in the initial stages of PSII assembly (PubMed:24681620). HliA-HliC and HliB-HliC heterodimers bind chlorophyll and carotenoids in a 1:0.6 ratio. Complexes bind mostly beta-carotenoid, but minor amounts of echinenone and beta-crytoxanthin are also detected. The complexes efficiently quench chlorophyll fluorescence, contributing to photoprotection (PubMed:35218444). Deletion of 4 to 5 members of the Hlip family suggests the proteins are involved in regulation of chlorophyll biosynthesis, in stabilization of chlorophyll-binding proteins and/or in reuse of chlorophylls, and may regulate tetrapyrrole biosynthesis (Probable). Might bind chlorophyll and/or carotenoids in association with HliD (called the ScpBE pair) (Probable).</text>
</comment>
<comment type="function">
    <text evidence="13 17">The Hlips might regulate tetrapyrrole biosynthesis, maybe at the level of aminolevulinic acid synthesis and probably stabilize PSII assembly intermediates (PubMed:11999371, PubMed:22090028).</text>
</comment>
<comment type="subunit">
    <text evidence="2 4 7 8 9 10">Forms heterodimers with both HliA and HliB; these are associated with photosystem II (PSII) assembly intermediates containing CP47 (psbB) (PubMed:35218444). In the absence of CP47 (psbB) and HliD, forms a homooligomer in vivo that binds 2 chlorophyll a and 1 beta-carotenoid per monomer (PubMed:29280045). Cofractionates in an approximately 50 kDa fraction the thylakoid membrane with HliD (PubMed:11024039). Associated in vivo with monomeric PSII (PubMed:17105726). Purified in several chlorophyll- and carotenoid-containing complexes, including photosystem II (PSII) assembly intermediate complex RCII* (iD1, D1, D2, PsbE, PsbF, PsbI, Ycf39, Ycf48, HliC and HliD) and the Ycf39-Hlip complex (Ycf39, HliC, HliD and pigments) (PubMed:24681620, PubMed:25706339).</text>
</comment>
<comment type="subcellular location">
    <subcellularLocation>
        <location evidence="2 9 15">Cellular thylakoid membrane</location>
        <topology evidence="18">Single-pass membrane protein</topology>
    </subcellularLocation>
</comment>
<comment type="induction">
    <text evidence="1 2">Transcription moderately up-regulated in the absence of photosystem I (PSI), probably a monocistronic operon (PubMed:10413515). Expressed at very low levels during growth under normal light (40 umol photons/m(2)/s), induced under high light (500 umol photons/m(2)/s for 6 hours) with maximal expression by 3 hours and no change for 24 hours, after growth at 4 degrees Celsius for 6 hours and less induced after nitrogen or sulfur deprivation (at protein level). Upon return to normal light protein expression is stable for 3 hours, then decreases (PubMed:11024039).</text>
</comment>
<comment type="disruption phenotype">
    <text evidence="2 3 5 6 7 8 10">No visible growth effect of the single mutant; double hliC-hliD deletions are out-competed by wild-type in high light (500 umol photons/m(2)/s). Quadruple hliA-hliB-hliC-hliD deletions die rapidly in high light but grow normally in normal light (40 umol photons/m(2)/s). Quadruple mutants are sensitive to norflurazon (PubMed:11024039). In an hliC-PSI-less mutant phycobilin and protochlorophyllide levels are reduced (PubMed:11999371). A single gene deletion red-shifts the chlorophyll/carotenoid ratio (PubMed:18836846). In a quintuple hliA-hliB-hliC-hliD-hemH deletion chlorophyll half-life decreases 2-fold while the half-life of PSII proteins does not change; photosystem II assembly intermediate RC47(1) is missing (RC47(1) is PSII monomer without CP43). De novo chlorophyll synthesis is very slow (PubMed:22090028). In a single deletion, reduction in RCII* abundance (PubMed:24681620). In a single deletion, no change in pigment binding of the Ycf39-Hlip complex (PubMed:25706339). In a single mutant dramatically reduced levels of HliA, significantly reduced levels of HliB (PubMed:35218444).</text>
</comment>
<comment type="similarity">
    <text evidence="12">Belongs to the Hlip family.</text>
</comment>
<comment type="sequence caution" evidence="2">
    <conflict type="erroneous initiation">
        <sequence resource="EMBL-CDS" id="BAA17603"/>
    </conflict>
    <text>Extended N-terminus.</text>
</comment>
<dbReference type="EMBL" id="BA000022">
    <property type="protein sequence ID" value="BAA17603.1"/>
    <property type="status" value="ALT_INIT"/>
    <property type="molecule type" value="Genomic_DNA"/>
</dbReference>
<dbReference type="PIR" id="S77269">
    <property type="entry name" value="S77269"/>
</dbReference>
<dbReference type="SMR" id="P73563"/>
<dbReference type="STRING" id="1148.gene:10498470"/>
<dbReference type="PaxDb" id="1148-1652683"/>
<dbReference type="EnsemblBacteria" id="BAA17603">
    <property type="protein sequence ID" value="BAA17603"/>
    <property type="gene ID" value="BAA17603"/>
</dbReference>
<dbReference type="KEGG" id="syn:ssl1633"/>
<dbReference type="eggNOG" id="COG0276">
    <property type="taxonomic scope" value="Bacteria"/>
</dbReference>
<dbReference type="InParanoid" id="P73563"/>
<dbReference type="PhylomeDB" id="P73563"/>
<dbReference type="Proteomes" id="UP000001425">
    <property type="component" value="Chromosome"/>
</dbReference>
<dbReference type="GO" id="GO:0009523">
    <property type="term" value="C:photosystem II"/>
    <property type="evidence" value="ECO:0007669"/>
    <property type="project" value="UniProtKB-KW"/>
</dbReference>
<dbReference type="GO" id="GO:0031676">
    <property type="term" value="C:plasma membrane-derived thylakoid membrane"/>
    <property type="evidence" value="ECO:0007669"/>
    <property type="project" value="UniProtKB-SubCell"/>
</dbReference>
<dbReference type="GO" id="GO:0042651">
    <property type="term" value="C:thylakoid membrane"/>
    <property type="evidence" value="ECO:0000314"/>
    <property type="project" value="UniProtKB"/>
</dbReference>
<dbReference type="GO" id="GO:0016168">
    <property type="term" value="F:chlorophyll binding"/>
    <property type="evidence" value="ECO:0000314"/>
    <property type="project" value="UniProtKB"/>
</dbReference>
<dbReference type="GO" id="GO:0031409">
    <property type="term" value="F:pigment binding"/>
    <property type="evidence" value="ECO:0007669"/>
    <property type="project" value="UniProtKB-KW"/>
</dbReference>
<dbReference type="GO" id="GO:1990066">
    <property type="term" value="P:energy quenching"/>
    <property type="evidence" value="ECO:0000314"/>
    <property type="project" value="UniProtKB"/>
</dbReference>
<dbReference type="GO" id="GO:0015979">
    <property type="term" value="P:photosynthesis"/>
    <property type="evidence" value="ECO:0007669"/>
    <property type="project" value="UniProtKB-KW"/>
</dbReference>
<dbReference type="Gene3D" id="1.10.3460.10">
    <property type="entry name" value="Chlorophyll a/b binding protein domain"/>
    <property type="match status" value="1"/>
</dbReference>
<dbReference type="SUPFAM" id="SSF103511">
    <property type="entry name" value="Chlorophyll a-b binding protein"/>
    <property type="match status" value="1"/>
</dbReference>
<gene>
    <name type="primary">hliC</name>
    <name evidence="11" type="synonym">scpB</name>
    <name evidence="20" type="ordered locus">ssl1633</name>
</gene>
<proteinExistence type="evidence at protein level"/>
<organism>
    <name type="scientific">Synechocystis sp. (strain ATCC 27184 / PCC 6803 / Kazusa)</name>
    <dbReference type="NCBI Taxonomy" id="1111708"/>
    <lineage>
        <taxon>Bacteria</taxon>
        <taxon>Bacillati</taxon>
        <taxon>Cyanobacteriota</taxon>
        <taxon>Cyanophyceae</taxon>
        <taxon>Synechococcales</taxon>
        <taxon>Merismopediaceae</taxon>
        <taxon>Synechocystis</taxon>
    </lineage>
</organism>
<sequence>MNNENSKFGFTAFAENWNGRLAMIGFSSALILELVSGQGVLHFFGIL</sequence>
<protein>
    <recommendedName>
        <fullName evidence="11">High light-inducible protein HliC</fullName>
    </recommendedName>
    <alternativeName>
        <fullName evidence="11">Small Cab-like protein ScpB</fullName>
    </alternativeName>
</protein>
<evidence type="ECO:0000269" key="1">
    <source>
    </source>
</evidence>
<evidence type="ECO:0000269" key="2">
    <source>
    </source>
</evidence>
<evidence type="ECO:0000269" key="3">
    <source>
    </source>
</evidence>
<evidence type="ECO:0000269" key="4">
    <source>
    </source>
</evidence>
<evidence type="ECO:0000269" key="5">
    <source>
    </source>
</evidence>
<evidence type="ECO:0000269" key="6">
    <source>
    </source>
</evidence>
<evidence type="ECO:0000269" key="7">
    <source>
    </source>
</evidence>
<evidence type="ECO:0000269" key="8">
    <source>
    </source>
</evidence>
<evidence type="ECO:0000269" key="9">
    <source>
    </source>
</evidence>
<evidence type="ECO:0000269" key="10">
    <source>
    </source>
</evidence>
<evidence type="ECO:0000303" key="11">
    <source>
    </source>
</evidence>
<evidence type="ECO:0000305" key="12"/>
<evidence type="ECO:0000305" key="13">
    <source>
    </source>
</evidence>
<evidence type="ECO:0000305" key="14">
    <source>
    </source>
</evidence>
<evidence type="ECO:0000305" key="15">
    <source>
    </source>
</evidence>
<evidence type="ECO:0000305" key="16">
    <source>
    </source>
</evidence>
<evidence type="ECO:0000305" key="17">
    <source>
    </source>
</evidence>
<evidence type="ECO:0000305" key="18">
    <source>
    </source>
</evidence>
<evidence type="ECO:0000305" key="19">
    <source>
    </source>
</evidence>
<evidence type="ECO:0000312" key="20">
    <source>
        <dbReference type="EMBL" id="BAA17603.1"/>
    </source>
</evidence>